<proteinExistence type="evidence at protein level"/>
<evidence type="ECO:0000250" key="1">
    <source>
        <dbReference type="UniProtKB" id="P54868"/>
    </source>
</evidence>
<evidence type="ECO:0000255" key="2">
    <source>
        <dbReference type="PROSITE-ProRule" id="PRU10116"/>
    </source>
</evidence>
<evidence type="ECO:0000269" key="3">
    <source>
    </source>
</evidence>
<evidence type="ECO:0000269" key="4">
    <source>
    </source>
</evidence>
<evidence type="ECO:0000303" key="5">
    <source>
    </source>
</evidence>
<evidence type="ECO:0000303" key="6">
    <source>
    </source>
</evidence>
<evidence type="ECO:0000305" key="7"/>
<evidence type="ECO:0000305" key="8">
    <source>
    </source>
</evidence>
<evidence type="ECO:0007744" key="9">
    <source>
    </source>
</evidence>
<accession>P54839</accession>
<accession>D6W0F9</accession>
<feature type="chain" id="PRO_0000213758" description="Hydroxymethylglutaryl-CoA synthase">
    <location>
        <begin position="1"/>
        <end position="491"/>
    </location>
</feature>
<feature type="active site" description="Proton donor/acceptor" evidence="2">
    <location>
        <position position="127"/>
    </location>
</feature>
<feature type="active site" description="Acyl-thioester intermediate" evidence="2">
    <location>
        <position position="159"/>
    </location>
</feature>
<feature type="active site" description="Proton donor/acceptor" evidence="2">
    <location>
        <position position="296"/>
    </location>
</feature>
<feature type="binding site" evidence="1">
    <location>
        <position position="159"/>
    </location>
    <ligand>
        <name>(3S)-3-hydroxy-3-methylglutaryl-CoA</name>
        <dbReference type="ChEBI" id="CHEBI:43074"/>
    </ligand>
</feature>
<feature type="binding site" evidence="1">
    <location>
        <position position="201"/>
    </location>
    <ligand>
        <name>(3S)-3-hydroxy-3-methylglutaryl-CoA</name>
        <dbReference type="ChEBI" id="CHEBI:43074"/>
    </ligand>
</feature>
<feature type="binding site" evidence="1">
    <location>
        <position position="250"/>
    </location>
    <ligand>
        <name>(3S)-3-hydroxy-3-methylglutaryl-CoA</name>
        <dbReference type="ChEBI" id="CHEBI:43074"/>
    </ligand>
</feature>
<feature type="binding site" evidence="1">
    <location>
        <position position="296"/>
    </location>
    <ligand>
        <name>(3S)-3-hydroxy-3-methylglutaryl-CoA</name>
        <dbReference type="ChEBI" id="CHEBI:43074"/>
    </ligand>
</feature>
<feature type="binding site" evidence="1">
    <location>
        <position position="305"/>
    </location>
    <ligand>
        <name>(3S)-3-hydroxy-3-methylglutaryl-CoA</name>
        <dbReference type="ChEBI" id="CHEBI:43074"/>
    </ligand>
</feature>
<feature type="binding site" evidence="1">
    <location>
        <position position="371"/>
    </location>
    <ligand>
        <name>(3S)-3-hydroxy-3-methylglutaryl-CoA</name>
        <dbReference type="ChEBI" id="CHEBI:43074"/>
    </ligand>
</feature>
<feature type="binding site" evidence="1">
    <location>
        <position position="405"/>
    </location>
    <ligand>
        <name>(3S)-3-hydroxy-3-methylglutaryl-CoA</name>
        <dbReference type="ChEBI" id="CHEBI:43074"/>
    </ligand>
</feature>
<feature type="modified residue" description="Phosphoserine" evidence="9">
    <location>
        <position position="276"/>
    </location>
</feature>
<comment type="function">
    <text evidence="3 6">Hydroxymethylglutaryl-CoA synthase; part of the first module of ergosterol biosynthesis pathway that includes the early steps of the pathway, conserved across all eukaryotes, and which results in the formation of mevalonate from acetyl-coenzyme A (acetyl-CoA) (PubMed:12702274). ERG13 condenses acetyl-CoA with acetoacetyl-CoA to form hydroxymethylglutaryl-CoA (HMG-CoA) (PubMed:12702274). The first module starts with the action of the cytosolic acetyl-CoA acetyltransferase ERG10 that catalyzes the formation of acetoacetyl-CoA. The hydroxymethylglutaryl-CoA synthase ERG13 then condenses acetyl-CoA with acetoacetyl-CoA to form HMG-CoA. The rate-limiting step of the early module is the reduction to mevalonate by the 3-hydroxy-3-methylglutaryl-coenzyme A (HMG-CoA) reductases HMG1 and HMG2 which are derived from a single ancestral HMGR gene by gene duplication (PubMed:32679672).</text>
</comment>
<comment type="catalytic activity">
    <reaction evidence="2 8">
        <text>acetoacetyl-CoA + acetyl-CoA + H2O = (3S)-3-hydroxy-3-methylglutaryl-CoA + CoA + H(+)</text>
        <dbReference type="Rhea" id="RHEA:10188"/>
        <dbReference type="ChEBI" id="CHEBI:15377"/>
        <dbReference type="ChEBI" id="CHEBI:15378"/>
        <dbReference type="ChEBI" id="CHEBI:43074"/>
        <dbReference type="ChEBI" id="CHEBI:57286"/>
        <dbReference type="ChEBI" id="CHEBI:57287"/>
        <dbReference type="ChEBI" id="CHEBI:57288"/>
        <dbReference type="EC" id="2.3.3.10"/>
    </reaction>
    <physiologicalReaction direction="left-to-right" evidence="8">
        <dbReference type="Rhea" id="RHEA:10189"/>
    </physiologicalReaction>
</comment>
<comment type="pathway">
    <text evidence="8">Metabolic intermediate biosynthesis; (R)-mevalonate biosynthesis; (R)-mevalonate from acetyl-CoA: step 2/3.</text>
</comment>
<comment type="disruption phenotype">
    <text evidence="3">Drastically increases HMG2 half-life.</text>
</comment>
<comment type="miscellaneous">
    <text evidence="4">Present with 34800 molecules/cell in log phase SD medium.</text>
</comment>
<comment type="similarity">
    <text evidence="7">Belongs to the thiolase-like superfamily. HMG-CoA synthase family.</text>
</comment>
<organism>
    <name type="scientific">Saccharomyces cerevisiae (strain ATCC 204508 / S288c)</name>
    <name type="common">Baker's yeast</name>
    <dbReference type="NCBI Taxonomy" id="559292"/>
    <lineage>
        <taxon>Eukaryota</taxon>
        <taxon>Fungi</taxon>
        <taxon>Dikarya</taxon>
        <taxon>Ascomycota</taxon>
        <taxon>Saccharomycotina</taxon>
        <taxon>Saccharomycetes</taxon>
        <taxon>Saccharomycetales</taxon>
        <taxon>Saccharomycetaceae</taxon>
        <taxon>Saccharomyces</taxon>
    </lineage>
</organism>
<keyword id="KW-0444">Lipid biosynthesis</keyword>
<keyword id="KW-0443">Lipid metabolism</keyword>
<keyword id="KW-0597">Phosphoprotein</keyword>
<keyword id="KW-1185">Reference proteome</keyword>
<keyword id="KW-0752">Steroid biosynthesis</keyword>
<keyword id="KW-0753">Steroid metabolism</keyword>
<keyword id="KW-0756">Sterol biosynthesis</keyword>
<keyword id="KW-1207">Sterol metabolism</keyword>
<keyword id="KW-0808">Transferase</keyword>
<gene>
    <name evidence="5" type="primary">ERG13</name>
    <name type="synonym">HMGS</name>
    <name type="ordered locus">YML126C</name>
    <name type="ORF">YM4987.09C</name>
</gene>
<protein>
    <recommendedName>
        <fullName evidence="5">Hydroxymethylglutaryl-CoA synthase</fullName>
        <shortName evidence="5">HMG-CoA synthase</shortName>
        <ecNumber evidence="8">2.3.3.10</ecNumber>
    </recommendedName>
    <alternativeName>
        <fullName evidence="5">3-hydroxy-3-methylglutaryl coenzyme A synthase</fullName>
    </alternativeName>
</protein>
<name>ERG13_YEAST</name>
<dbReference type="EC" id="2.3.3.10" evidence="8"/>
<dbReference type="EMBL" id="X96617">
    <property type="protein sequence ID" value="CAA65437.1"/>
    <property type="molecule type" value="Genomic_DNA"/>
</dbReference>
<dbReference type="EMBL" id="Z50178">
    <property type="protein sequence ID" value="CAA90557.1"/>
    <property type="molecule type" value="Genomic_DNA"/>
</dbReference>
<dbReference type="EMBL" id="BK006946">
    <property type="protein sequence ID" value="DAA09773.1"/>
    <property type="molecule type" value="Genomic_DNA"/>
</dbReference>
<dbReference type="PIR" id="S58202">
    <property type="entry name" value="S58202"/>
</dbReference>
<dbReference type="RefSeq" id="NP_013580.1">
    <property type="nucleotide sequence ID" value="NM_001182489.1"/>
</dbReference>
<dbReference type="SMR" id="P54839"/>
<dbReference type="BioGRID" id="35079">
    <property type="interactions" value="292"/>
</dbReference>
<dbReference type="DIP" id="DIP-5071N"/>
<dbReference type="FunCoup" id="P54839">
    <property type="interactions" value="841"/>
</dbReference>
<dbReference type="IntAct" id="P54839">
    <property type="interactions" value="36"/>
</dbReference>
<dbReference type="MINT" id="P54839"/>
<dbReference type="STRING" id="4932.YML126C"/>
<dbReference type="iPTMnet" id="P54839"/>
<dbReference type="PaxDb" id="4932-YML126C"/>
<dbReference type="PeptideAtlas" id="P54839"/>
<dbReference type="EnsemblFungi" id="YML126C_mRNA">
    <property type="protein sequence ID" value="YML126C"/>
    <property type="gene ID" value="YML126C"/>
</dbReference>
<dbReference type="GeneID" id="854913"/>
<dbReference type="KEGG" id="sce:YML126C"/>
<dbReference type="AGR" id="SGD:S000004595"/>
<dbReference type="SGD" id="S000004595">
    <property type="gene designation" value="ERG13"/>
</dbReference>
<dbReference type="VEuPathDB" id="FungiDB:YML126C"/>
<dbReference type="eggNOG" id="KOG1393">
    <property type="taxonomic scope" value="Eukaryota"/>
</dbReference>
<dbReference type="GeneTree" id="ENSGT00390000006096"/>
<dbReference type="HOGENOM" id="CLU_008065_0_1_1"/>
<dbReference type="InParanoid" id="P54839"/>
<dbReference type="OMA" id="DDAYNWI"/>
<dbReference type="OrthoDB" id="1269963at2759"/>
<dbReference type="BioCyc" id="MetaCyc:YML126C-MONOMER"/>
<dbReference type="BioCyc" id="YEAST:YML126C-MONOMER"/>
<dbReference type="BRENDA" id="2.3.3.10">
    <property type="organism ID" value="984"/>
</dbReference>
<dbReference type="Reactome" id="R-SCE-191273">
    <property type="pathway name" value="Cholesterol biosynthesis"/>
</dbReference>
<dbReference type="Reactome" id="R-SCE-77111">
    <property type="pathway name" value="Synthesis of Ketone Bodies"/>
</dbReference>
<dbReference type="Reactome" id="R-SCE-9837999">
    <property type="pathway name" value="Mitochondrial protein degradation"/>
</dbReference>
<dbReference type="UniPathway" id="UPA00058">
    <property type="reaction ID" value="UER00102"/>
</dbReference>
<dbReference type="BioGRID-ORCS" id="854913">
    <property type="hits" value="7 hits in 10 CRISPR screens"/>
</dbReference>
<dbReference type="PRO" id="PR:P54839"/>
<dbReference type="Proteomes" id="UP000002311">
    <property type="component" value="Chromosome XIII"/>
</dbReference>
<dbReference type="RNAct" id="P54839">
    <property type="molecule type" value="protein"/>
</dbReference>
<dbReference type="GO" id="GO:0005739">
    <property type="term" value="C:mitochondrion"/>
    <property type="evidence" value="ECO:0000303"/>
    <property type="project" value="UniProt"/>
</dbReference>
<dbReference type="GO" id="GO:0005634">
    <property type="term" value="C:nucleus"/>
    <property type="evidence" value="ECO:0007005"/>
    <property type="project" value="SGD"/>
</dbReference>
<dbReference type="GO" id="GO:0004421">
    <property type="term" value="F:hydroxymethylglutaryl-CoA synthase activity"/>
    <property type="evidence" value="ECO:0000315"/>
    <property type="project" value="UniProt"/>
</dbReference>
<dbReference type="GO" id="GO:0006084">
    <property type="term" value="P:acetyl-CoA metabolic process"/>
    <property type="evidence" value="ECO:0000318"/>
    <property type="project" value="GO_Central"/>
</dbReference>
<dbReference type="GO" id="GO:0006696">
    <property type="term" value="P:ergosterol biosynthetic process"/>
    <property type="evidence" value="ECO:0000315"/>
    <property type="project" value="UniProt"/>
</dbReference>
<dbReference type="GO" id="GO:0010142">
    <property type="term" value="P:farnesyl diphosphate biosynthetic process, mevalonate pathway"/>
    <property type="evidence" value="ECO:0000318"/>
    <property type="project" value="GO_Central"/>
</dbReference>
<dbReference type="CDD" id="cd00827">
    <property type="entry name" value="init_cond_enzymes"/>
    <property type="match status" value="1"/>
</dbReference>
<dbReference type="FunFam" id="3.40.47.10:FF:000008">
    <property type="entry name" value="3-hydroxy-3-methylglutaryl coenzyme A synthase"/>
    <property type="match status" value="1"/>
</dbReference>
<dbReference type="Gene3D" id="3.40.47.10">
    <property type="match status" value="1"/>
</dbReference>
<dbReference type="InterPro" id="IPR000590">
    <property type="entry name" value="HMG_CoA_synt_AS"/>
</dbReference>
<dbReference type="InterPro" id="IPR013746">
    <property type="entry name" value="HMG_CoA_synt_C_dom"/>
</dbReference>
<dbReference type="InterPro" id="IPR013528">
    <property type="entry name" value="HMG_CoA_synth_N"/>
</dbReference>
<dbReference type="InterPro" id="IPR010122">
    <property type="entry name" value="HMG_CoA_synthase_euk"/>
</dbReference>
<dbReference type="InterPro" id="IPR016039">
    <property type="entry name" value="Thiolase-like"/>
</dbReference>
<dbReference type="NCBIfam" id="TIGR01833">
    <property type="entry name" value="HMG-CoA-S_euk"/>
    <property type="match status" value="1"/>
</dbReference>
<dbReference type="PANTHER" id="PTHR43323">
    <property type="entry name" value="3-HYDROXY-3-METHYLGLUTARYL COENZYME A SYNTHASE"/>
    <property type="match status" value="1"/>
</dbReference>
<dbReference type="PANTHER" id="PTHR43323:SF2">
    <property type="entry name" value="HYDROXYMETHYLGLUTARYL-COA SYNTHASE"/>
    <property type="match status" value="1"/>
</dbReference>
<dbReference type="Pfam" id="PF08540">
    <property type="entry name" value="HMG_CoA_synt_C"/>
    <property type="match status" value="1"/>
</dbReference>
<dbReference type="Pfam" id="PF01154">
    <property type="entry name" value="HMG_CoA_synt_N"/>
    <property type="match status" value="1"/>
</dbReference>
<dbReference type="SUPFAM" id="SSF53901">
    <property type="entry name" value="Thiolase-like"/>
    <property type="match status" value="2"/>
</dbReference>
<dbReference type="PROSITE" id="PS01226">
    <property type="entry name" value="HMG_COA_SYNTHASE"/>
    <property type="match status" value="1"/>
</dbReference>
<sequence>MKLSTKLCWCGIKGRLRPQKQQQLHNTNLQMTELKKQKTAEQKTRPQNVGIKGIQIYIPTQCVNQSELEKFDGVSQGKYTIGLGQTNMSFVNDREDIYSMSLTVLSKLIKSYNIDTNKIGRLEVGTETLIDKSKSVKSVLMQLFGENTDVEGIDTLNACYGGTNALFNSLNWIESNAWDGRDAIVVCGDIAIYDKGAARPTGGAGTVAMWIGPDAPIVFDSVRASYMEHAYDFYKPDFTSEYPYVDGHFSLTCYVKALDQVYKSYSKKAISKGLVSDPAGSDALNVLKYFDYNVFHVPTCKLVTKSYGRLLYNDFRANPQLFPEVDAELATRDYDESLTDKNIEKTFVNVAKPFHKERVAQSLIVPTNTGNMYTASVYAAFASLLNYVGSDDLQGKRVGLFSYGSGLAASLYSCKIVGDVQHIIKELDITNKLAKRITETPKDYEAAIELRENAHLKKNFKPQGSIEHLQSGVYYLTNIDDKFRRSYDVKK</sequence>
<reference key="1">
    <citation type="submission" date="1996-03" db="EMBL/GenBank/DDBJ databases">
        <authorList>
            <person name="Kribii R."/>
            <person name="Cordier H."/>
            <person name="Karst F."/>
        </authorList>
    </citation>
    <scope>NUCLEOTIDE SEQUENCE [GENOMIC DNA]</scope>
    <source>
        <strain>ATCC 28383 / FL100 / VTT C-80102</strain>
    </source>
</reference>
<reference key="2">
    <citation type="journal article" date="1997" name="Nature">
        <title>The nucleotide sequence of Saccharomyces cerevisiae chromosome XIII.</title>
        <authorList>
            <person name="Bowman S."/>
            <person name="Churcher C.M."/>
            <person name="Badcock K."/>
            <person name="Brown D."/>
            <person name="Chillingworth T."/>
            <person name="Connor R."/>
            <person name="Dedman K."/>
            <person name="Devlin K."/>
            <person name="Gentles S."/>
            <person name="Hamlin N."/>
            <person name="Hunt S."/>
            <person name="Jagels K."/>
            <person name="Lye G."/>
            <person name="Moule S."/>
            <person name="Odell C."/>
            <person name="Pearson D."/>
            <person name="Rajandream M.A."/>
            <person name="Rice P."/>
            <person name="Skelton J."/>
            <person name="Walsh S.V."/>
            <person name="Whitehead S."/>
            <person name="Barrell B.G."/>
        </authorList>
    </citation>
    <scope>NUCLEOTIDE SEQUENCE [LARGE SCALE GENOMIC DNA]</scope>
    <source>
        <strain>ATCC 204508 / S288c</strain>
    </source>
</reference>
<reference key="3">
    <citation type="journal article" date="2014" name="G3 (Bethesda)">
        <title>The reference genome sequence of Saccharomyces cerevisiae: Then and now.</title>
        <authorList>
            <person name="Engel S.R."/>
            <person name="Dietrich F.S."/>
            <person name="Fisk D.G."/>
            <person name="Binkley G."/>
            <person name="Balakrishnan R."/>
            <person name="Costanzo M.C."/>
            <person name="Dwight S.S."/>
            <person name="Hitz B.C."/>
            <person name="Karra K."/>
            <person name="Nash R.S."/>
            <person name="Weng S."/>
            <person name="Wong E.D."/>
            <person name="Lloyd P."/>
            <person name="Skrzypek M.S."/>
            <person name="Miyasato S.R."/>
            <person name="Simison M."/>
            <person name="Cherry J.M."/>
        </authorList>
    </citation>
    <scope>GENOME REANNOTATION</scope>
    <source>
        <strain>ATCC 204508 / S288c</strain>
    </source>
</reference>
<reference key="4">
    <citation type="journal article" date="2002" name="FEMS Yeast Res.">
        <title>Dolichol biosynthesis in the yeast Saccharomyces cerevisiae: an insight into the regulatory role of farnesyl diphosphate synthase.</title>
        <authorList>
            <person name="Grabinska K."/>
            <person name="Palamarczyk G."/>
        </authorList>
    </citation>
    <scope>FUNCTION</scope>
    <scope>DISRUPTION PHENOTYPE</scope>
    <scope>PATHWAY</scope>
</reference>
<reference key="5">
    <citation type="journal article" date="2003" name="Nature">
        <title>Global analysis of protein expression in yeast.</title>
        <authorList>
            <person name="Ghaemmaghami S."/>
            <person name="Huh W.-K."/>
            <person name="Bower K."/>
            <person name="Howson R.W."/>
            <person name="Belle A."/>
            <person name="Dephoure N."/>
            <person name="O'Shea E.K."/>
            <person name="Weissman J.S."/>
        </authorList>
    </citation>
    <scope>LEVEL OF PROTEIN EXPRESSION [LARGE SCALE ANALYSIS]</scope>
</reference>
<reference key="6">
    <citation type="journal article" date="2008" name="Mol. Cell. Proteomics">
        <title>A multidimensional chromatography technology for in-depth phosphoproteome analysis.</title>
        <authorList>
            <person name="Albuquerque C.P."/>
            <person name="Smolka M.B."/>
            <person name="Payne S.H."/>
            <person name="Bafna V."/>
            <person name="Eng J."/>
            <person name="Zhou H."/>
        </authorList>
    </citation>
    <scope>PHOSPHORYLATION [LARGE SCALE ANALYSIS] AT SER-276</scope>
    <scope>IDENTIFICATION BY MASS SPECTROMETRY [LARGE SCALE ANALYSIS]</scope>
</reference>
<reference key="7">
    <citation type="journal article" date="2020" name="Genes (Basel)">
        <title>Regulation of ergosterol biosynthesis in Saccharomyces cerevisiae.</title>
        <authorList>
            <person name="Jorda T."/>
            <person name="Puig S."/>
        </authorList>
    </citation>
    <scope>REVIEW ON ERGOSTEROL BIOSYNTHESIS</scope>
</reference>